<keyword id="KW-1015">Disulfide bond</keyword>
<keyword id="KW-0256">Endoplasmic reticulum</keyword>
<keyword id="KW-0325">Glycoprotein</keyword>
<keyword id="KW-0460">Magnesium</keyword>
<keyword id="KW-0472">Membrane</keyword>
<keyword id="KW-1185">Reference proteome</keyword>
<keyword id="KW-0732">Signal</keyword>
<keyword id="KW-0812">Transmembrane</keyword>
<keyword id="KW-1133">Transmembrane helix</keyword>
<keyword id="KW-0813">Transport</keyword>
<comment type="function">
    <text evidence="2">Acts as accessory component of the N-oligosaccharyl transferase (OST) complex which catalyzes the transfer of a high mannose oligosaccharide from a lipid-linked oligosaccharide donor to an asparagine residue within an Asn-X-Ser/Thr consensus motif in nascent polypeptide chains. Involved in N-glycosylation of STT3B-dependent substrates. Specifically required for the glycosylation of a subset of acceptor sites that are near cysteine residues; in this function seems to act redundantly with MAGT1. In its oxidized form proposed to form transient mixed disulfides with a glycoprotein substrate to facilitate access of STT3B to the unmodified acceptor site. Also has oxidoreductase-independent functions in the STT3B-containing OST complex possibly involving substrate recognition. Could indirectly play a role in Mg(2+) transport.</text>
</comment>
<comment type="pathway">
    <text>Protein modification; protein glycosylation.</text>
</comment>
<comment type="subunit">
    <text evidence="2">Accessory component of the STT3B-containing form of the oligosaccharyltransferase (OST) complex. OST exists in two different complex forms which contain common core subunits RPN1, RPN2, OST48, OST4, DAD1 and TMEM258, either STT3A or STT3B as catalytic subunits, and form-specific accessory subunits. OST can form stable complexes with the Sec61 complex or with both the Sec61 and TRAP complexes. The association of TUSC3 or MAGT1 with the STT3B-containing complex seems to be mutually exclusvice.</text>
</comment>
<comment type="subcellular location">
    <subcellularLocation>
        <location evidence="1">Endoplasmic reticulum membrane</location>
        <topology evidence="1">Multi-pass membrane protein</topology>
    </subcellularLocation>
</comment>
<comment type="similarity">
    <text evidence="4">Belongs to the OST3/OST6 family.</text>
</comment>
<evidence type="ECO:0000250" key="1"/>
<evidence type="ECO:0000250" key="2">
    <source>
        <dbReference type="UniProtKB" id="Q13454"/>
    </source>
</evidence>
<evidence type="ECO:0000255" key="3"/>
<evidence type="ECO:0000305" key="4"/>
<reference key="1">
    <citation type="submission" date="2005-11" db="EMBL/GenBank/DDBJ databases">
        <authorList>
            <consortium name="NIH - Mammalian Gene Collection (MGC) project"/>
        </authorList>
    </citation>
    <scope>NUCLEOTIDE SEQUENCE [LARGE SCALE MRNA]</scope>
    <source>
        <strain>Crossbred X Angus</strain>
        <tissue>Liver</tissue>
    </source>
</reference>
<proteinExistence type="evidence at transcript level"/>
<protein>
    <recommendedName>
        <fullName>Dolichyl-diphosphooligosaccharide--protein glycosyltransferase subunit TUSC3</fullName>
        <shortName>Oligosaccharyl transferase subunit TUSC3</shortName>
    </recommendedName>
    <alternativeName>
        <fullName>Magnesium uptake/transporter TUSC3</fullName>
    </alternativeName>
    <alternativeName>
        <fullName>Tumor suppressor candidate 3</fullName>
    </alternativeName>
</protein>
<accession>Q32L57</accession>
<organism>
    <name type="scientific">Bos taurus</name>
    <name type="common">Bovine</name>
    <dbReference type="NCBI Taxonomy" id="9913"/>
    <lineage>
        <taxon>Eukaryota</taxon>
        <taxon>Metazoa</taxon>
        <taxon>Chordata</taxon>
        <taxon>Craniata</taxon>
        <taxon>Vertebrata</taxon>
        <taxon>Euteleostomi</taxon>
        <taxon>Mammalia</taxon>
        <taxon>Eutheria</taxon>
        <taxon>Laurasiatheria</taxon>
        <taxon>Artiodactyla</taxon>
        <taxon>Ruminantia</taxon>
        <taxon>Pecora</taxon>
        <taxon>Bovidae</taxon>
        <taxon>Bovinae</taxon>
        <taxon>Bos</taxon>
    </lineage>
</organism>
<sequence length="347" mass="39536">MGARGAPSRRRQAGRRPRYLPTGSFPFLLLLLLLCIQLGGGQKKKENLLAEKVEQLMEWSSRRSVFRMNGDKFRKFIKAPPRNYSMIVMFTALQPQRQCSVCRLANEEYQILANSWRYSSAFCNKLFFSKVDYDEGTDIFQQLNINSAPTFMHFPPKGRPKRADTFDLQRIGFGAEQLAKWIADRTDVHIRVFRPPNYSGTIALALLVSLVGGLLYLRRNNLEFIYNKTGWAMVSLCIVFAMTSGQMWNHIRGPPYAHKNPHNGQVSYIHGSSQVQFVAESHIILVLNAAITMGMDLLNEAATSKGDVGKRRIICLVGLGLVVFFFSFLLSIFRSKYHGYPYSFLIK</sequence>
<name>TUSC3_BOVIN</name>
<dbReference type="EMBL" id="BC109753">
    <property type="protein sequence ID" value="AAI09754.1"/>
    <property type="molecule type" value="mRNA"/>
</dbReference>
<dbReference type="RefSeq" id="NP_001074383.1">
    <property type="nucleotide sequence ID" value="NM_001080914.2"/>
</dbReference>
<dbReference type="SMR" id="Q32L57"/>
<dbReference type="FunCoup" id="Q32L57">
    <property type="interactions" value="1459"/>
</dbReference>
<dbReference type="STRING" id="9913.ENSBTAP00000012110"/>
<dbReference type="GlyCosmos" id="Q32L57">
    <property type="glycosylation" value="1 site, No reported glycans"/>
</dbReference>
<dbReference type="GlyGen" id="Q32L57">
    <property type="glycosylation" value="1 site"/>
</dbReference>
<dbReference type="PaxDb" id="9913-ENSBTAP00000012110"/>
<dbReference type="GeneID" id="615007"/>
<dbReference type="KEGG" id="bta:615007"/>
<dbReference type="CTD" id="7991"/>
<dbReference type="eggNOG" id="KOG2603">
    <property type="taxonomic scope" value="Eukaryota"/>
</dbReference>
<dbReference type="InParanoid" id="Q32L57"/>
<dbReference type="OrthoDB" id="67566at2759"/>
<dbReference type="UniPathway" id="UPA00378"/>
<dbReference type="Proteomes" id="UP000009136">
    <property type="component" value="Unplaced"/>
</dbReference>
<dbReference type="GO" id="GO:0005739">
    <property type="term" value="C:mitochondrion"/>
    <property type="evidence" value="ECO:0000250"/>
    <property type="project" value="UniProtKB"/>
</dbReference>
<dbReference type="GO" id="GO:0008250">
    <property type="term" value="C:oligosaccharyltransferase complex"/>
    <property type="evidence" value="ECO:0000250"/>
    <property type="project" value="UniProtKB"/>
</dbReference>
<dbReference type="GO" id="GO:0062062">
    <property type="term" value="F:oligosaccharyltransferase complex binding"/>
    <property type="evidence" value="ECO:0000250"/>
    <property type="project" value="UniProtKB"/>
</dbReference>
<dbReference type="GO" id="GO:0050890">
    <property type="term" value="P:cognition"/>
    <property type="evidence" value="ECO:0000250"/>
    <property type="project" value="UniProtKB"/>
</dbReference>
<dbReference type="GO" id="GO:0015693">
    <property type="term" value="P:magnesium ion transport"/>
    <property type="evidence" value="ECO:0000250"/>
    <property type="project" value="UniProtKB"/>
</dbReference>
<dbReference type="GO" id="GO:0018279">
    <property type="term" value="P:protein N-linked glycosylation via asparagine"/>
    <property type="evidence" value="ECO:0000250"/>
    <property type="project" value="UniProtKB"/>
</dbReference>
<dbReference type="CDD" id="cd02947">
    <property type="entry name" value="TRX_family"/>
    <property type="match status" value="1"/>
</dbReference>
<dbReference type="FunFam" id="3.40.30.10:FF:000009">
    <property type="entry name" value="Tumor suppressor candidate 3"/>
    <property type="match status" value="1"/>
</dbReference>
<dbReference type="Gene3D" id="3.40.30.10">
    <property type="entry name" value="Glutaredoxin"/>
    <property type="match status" value="1"/>
</dbReference>
<dbReference type="InterPro" id="IPR021149">
    <property type="entry name" value="OligosaccharylTrfase_OST3/OST6"/>
</dbReference>
<dbReference type="InterPro" id="IPR036249">
    <property type="entry name" value="Thioredoxin-like_sf"/>
</dbReference>
<dbReference type="PANTHER" id="PTHR12692">
    <property type="entry name" value="DOLICHYL-DIPHOSPHOOLIGOSACCHARIDE--PROTEIN GLYCOSYLTRANSFERASE-RELATED"/>
    <property type="match status" value="1"/>
</dbReference>
<dbReference type="PANTHER" id="PTHR12692:SF1">
    <property type="entry name" value="TUMOR SUPPRESSOR CANDIDATE 3"/>
    <property type="match status" value="1"/>
</dbReference>
<dbReference type="Pfam" id="PF04756">
    <property type="entry name" value="OST3_OST6"/>
    <property type="match status" value="1"/>
</dbReference>
<dbReference type="SUPFAM" id="SSF52833">
    <property type="entry name" value="Thioredoxin-like"/>
    <property type="match status" value="1"/>
</dbReference>
<gene>
    <name type="primary">TUSC3</name>
</gene>
<feature type="signal peptide" evidence="3">
    <location>
        <begin position="1"/>
        <end position="41"/>
    </location>
</feature>
<feature type="chain" id="PRO_0000245498" description="Dolichyl-diphosphooligosaccharide--protein glycosyltransferase subunit TUSC3">
    <location>
        <begin position="42"/>
        <end position="347"/>
    </location>
</feature>
<feature type="topological domain" description="Lumenal" evidence="3">
    <location>
        <begin position="42"/>
        <end position="196"/>
    </location>
</feature>
<feature type="transmembrane region" description="Helical" evidence="3">
    <location>
        <begin position="197"/>
        <end position="217"/>
    </location>
</feature>
<feature type="topological domain" description="Cytoplasmic" evidence="3">
    <location>
        <begin position="218"/>
        <end position="221"/>
    </location>
</feature>
<feature type="transmembrane region" description="Helical" evidence="3">
    <location>
        <begin position="222"/>
        <end position="242"/>
    </location>
</feature>
<feature type="topological domain" description="Lumenal" evidence="3">
    <location>
        <begin position="243"/>
        <end position="276"/>
    </location>
</feature>
<feature type="transmembrane region" description="Helical" evidence="3">
    <location>
        <begin position="277"/>
        <end position="297"/>
    </location>
</feature>
<feature type="topological domain" description="Cytoplasmic" evidence="3">
    <location>
        <begin position="298"/>
        <end position="312"/>
    </location>
</feature>
<feature type="transmembrane region" description="Helical" evidence="3">
    <location>
        <begin position="313"/>
        <end position="333"/>
    </location>
</feature>
<feature type="topological domain" description="Lumenal" evidence="3">
    <location>
        <begin position="334"/>
        <end position="347"/>
    </location>
</feature>
<feature type="domain" description="Thioredoxin">
    <location>
        <begin position="59"/>
        <end position="187"/>
    </location>
</feature>
<feature type="glycosylation site" description="N-linked (GlcNAc...) asparagine" evidence="3">
    <location>
        <position position="83"/>
    </location>
</feature>
<feature type="disulfide bond" description="Redox-active" evidence="1">
    <location>
        <begin position="99"/>
        <end position="102"/>
    </location>
</feature>